<proteinExistence type="inferred from homology"/>
<gene>
    <name evidence="1" type="primary">lipB</name>
    <name type="ordered locus">Mjls_3326</name>
</gene>
<accession>A3Q1S7</accession>
<keyword id="KW-0012">Acyltransferase</keyword>
<keyword id="KW-0963">Cytoplasm</keyword>
<keyword id="KW-0808">Transferase</keyword>
<sequence length="238" mass="24955">MSMAISIRSSTRPVEVRRLGTVEYLDAWELQRGLVDARVAGGSDALLLLQHPSVYTAGKRTEPHERPADGTPVVDTDRGGKITWHGPGQLVGYPIVGLAEPLDVVNFVRRIEEALIAVCTGLGLDAGRVEGRSGVWLPGDGLRPERKIGAIGIRVSRGTTLHGFALNCDCDLSAFSAIVPCGIADAGVTSLTAELGRRVTVDEVTDAVAARVCDALDGRLAVSGVSVDTYASGVASTQ</sequence>
<dbReference type="EC" id="2.3.1.181" evidence="1"/>
<dbReference type="EMBL" id="CP000580">
    <property type="protein sequence ID" value="ABN99104.1"/>
    <property type="molecule type" value="Genomic_DNA"/>
</dbReference>
<dbReference type="SMR" id="A3Q1S7"/>
<dbReference type="KEGG" id="mjl:Mjls_3326"/>
<dbReference type="HOGENOM" id="CLU_035168_2_1_11"/>
<dbReference type="UniPathway" id="UPA00538">
    <property type="reaction ID" value="UER00592"/>
</dbReference>
<dbReference type="GO" id="GO:0005737">
    <property type="term" value="C:cytoplasm"/>
    <property type="evidence" value="ECO:0007669"/>
    <property type="project" value="UniProtKB-SubCell"/>
</dbReference>
<dbReference type="GO" id="GO:0033819">
    <property type="term" value="F:lipoyl(octanoyl) transferase activity"/>
    <property type="evidence" value="ECO:0007669"/>
    <property type="project" value="UniProtKB-EC"/>
</dbReference>
<dbReference type="GO" id="GO:0036211">
    <property type="term" value="P:protein modification process"/>
    <property type="evidence" value="ECO:0007669"/>
    <property type="project" value="InterPro"/>
</dbReference>
<dbReference type="CDD" id="cd16444">
    <property type="entry name" value="LipB"/>
    <property type="match status" value="1"/>
</dbReference>
<dbReference type="FunFam" id="3.30.930.10:FF:000035">
    <property type="entry name" value="Putative lipoyltransferase 2, mitochondrial"/>
    <property type="match status" value="1"/>
</dbReference>
<dbReference type="Gene3D" id="3.30.930.10">
    <property type="entry name" value="Bira Bifunctional Protein, Domain 2"/>
    <property type="match status" value="1"/>
</dbReference>
<dbReference type="HAMAP" id="MF_00013">
    <property type="entry name" value="LipB"/>
    <property type="match status" value="1"/>
</dbReference>
<dbReference type="InterPro" id="IPR045864">
    <property type="entry name" value="aa-tRNA-synth_II/BPL/LPL"/>
</dbReference>
<dbReference type="InterPro" id="IPR004143">
    <property type="entry name" value="BPL_LPL_catalytic"/>
</dbReference>
<dbReference type="InterPro" id="IPR000544">
    <property type="entry name" value="Octanoyltransferase"/>
</dbReference>
<dbReference type="InterPro" id="IPR020605">
    <property type="entry name" value="Octanoyltransferase_CS"/>
</dbReference>
<dbReference type="NCBIfam" id="TIGR00214">
    <property type="entry name" value="lipB"/>
    <property type="match status" value="1"/>
</dbReference>
<dbReference type="NCBIfam" id="NF010925">
    <property type="entry name" value="PRK14345.1"/>
    <property type="match status" value="1"/>
</dbReference>
<dbReference type="PANTHER" id="PTHR10993:SF7">
    <property type="entry name" value="LIPOYLTRANSFERASE 2, MITOCHONDRIAL-RELATED"/>
    <property type="match status" value="1"/>
</dbReference>
<dbReference type="PANTHER" id="PTHR10993">
    <property type="entry name" value="OCTANOYLTRANSFERASE"/>
    <property type="match status" value="1"/>
</dbReference>
<dbReference type="Pfam" id="PF21948">
    <property type="entry name" value="LplA-B_cat"/>
    <property type="match status" value="1"/>
</dbReference>
<dbReference type="PIRSF" id="PIRSF016262">
    <property type="entry name" value="LPLase"/>
    <property type="match status" value="1"/>
</dbReference>
<dbReference type="SUPFAM" id="SSF55681">
    <property type="entry name" value="Class II aaRS and biotin synthetases"/>
    <property type="match status" value="1"/>
</dbReference>
<dbReference type="PROSITE" id="PS51733">
    <property type="entry name" value="BPL_LPL_CATALYTIC"/>
    <property type="match status" value="1"/>
</dbReference>
<dbReference type="PROSITE" id="PS01313">
    <property type="entry name" value="LIPB"/>
    <property type="match status" value="1"/>
</dbReference>
<comment type="function">
    <text evidence="1">Catalyzes the transfer of endogenously produced octanoic acid from octanoyl-acyl-carrier-protein onto the lipoyl domains of lipoate-dependent enzymes. Lipoyl-ACP can also act as a substrate although octanoyl-ACP is likely to be the physiological substrate.</text>
</comment>
<comment type="catalytic activity">
    <reaction evidence="1">
        <text>octanoyl-[ACP] + L-lysyl-[protein] = N(6)-octanoyl-L-lysyl-[protein] + holo-[ACP] + H(+)</text>
        <dbReference type="Rhea" id="RHEA:17665"/>
        <dbReference type="Rhea" id="RHEA-COMP:9636"/>
        <dbReference type="Rhea" id="RHEA-COMP:9685"/>
        <dbReference type="Rhea" id="RHEA-COMP:9752"/>
        <dbReference type="Rhea" id="RHEA-COMP:9928"/>
        <dbReference type="ChEBI" id="CHEBI:15378"/>
        <dbReference type="ChEBI" id="CHEBI:29969"/>
        <dbReference type="ChEBI" id="CHEBI:64479"/>
        <dbReference type="ChEBI" id="CHEBI:78463"/>
        <dbReference type="ChEBI" id="CHEBI:78809"/>
        <dbReference type="EC" id="2.3.1.181"/>
    </reaction>
</comment>
<comment type="pathway">
    <text evidence="1">Protein modification; protein lipoylation via endogenous pathway; protein N(6)-(lipoyl)lysine from octanoyl-[acyl-carrier-protein]: step 1/2.</text>
</comment>
<comment type="subcellular location">
    <subcellularLocation>
        <location evidence="1">Cytoplasm</location>
    </subcellularLocation>
</comment>
<comment type="miscellaneous">
    <text evidence="1">In the reaction, the free carboxyl group of octanoic acid is attached via an amide linkage to the epsilon-amino group of a specific lysine residue of lipoyl domains of lipoate-dependent enzymes.</text>
</comment>
<comment type="similarity">
    <text evidence="1">Belongs to the LipB family.</text>
</comment>
<feature type="chain" id="PRO_0000321648" description="Octanoyltransferase">
    <location>
        <begin position="1"/>
        <end position="238"/>
    </location>
</feature>
<feature type="domain" description="BPL/LPL catalytic" evidence="2">
    <location>
        <begin position="40"/>
        <end position="220"/>
    </location>
</feature>
<feature type="active site" description="Acyl-thioester intermediate" evidence="1">
    <location>
        <position position="181"/>
    </location>
</feature>
<feature type="binding site" evidence="1">
    <location>
        <begin position="78"/>
        <end position="85"/>
    </location>
    <ligand>
        <name>substrate</name>
    </ligand>
</feature>
<feature type="binding site" evidence="1">
    <location>
        <begin position="150"/>
        <end position="152"/>
    </location>
    <ligand>
        <name>substrate</name>
    </ligand>
</feature>
<feature type="binding site" evidence="1">
    <location>
        <begin position="163"/>
        <end position="165"/>
    </location>
    <ligand>
        <name>substrate</name>
    </ligand>
</feature>
<feature type="site" description="Lowers pKa of active site Cys" evidence="1">
    <location>
        <position position="147"/>
    </location>
</feature>
<name>LIPB_MYCSJ</name>
<evidence type="ECO:0000255" key="1">
    <source>
        <dbReference type="HAMAP-Rule" id="MF_00013"/>
    </source>
</evidence>
<evidence type="ECO:0000255" key="2">
    <source>
        <dbReference type="PROSITE-ProRule" id="PRU01067"/>
    </source>
</evidence>
<protein>
    <recommendedName>
        <fullName evidence="1">Octanoyltransferase</fullName>
        <ecNumber evidence="1">2.3.1.181</ecNumber>
    </recommendedName>
    <alternativeName>
        <fullName evidence="1">Lipoate-protein ligase B</fullName>
    </alternativeName>
    <alternativeName>
        <fullName evidence="1">Lipoyl/octanoyl transferase</fullName>
    </alternativeName>
    <alternativeName>
        <fullName evidence="1">Octanoyl-[acyl-carrier-protein]-protein N-octanoyltransferase</fullName>
    </alternativeName>
</protein>
<organism>
    <name type="scientific">Mycobacterium sp. (strain JLS)</name>
    <dbReference type="NCBI Taxonomy" id="164757"/>
    <lineage>
        <taxon>Bacteria</taxon>
        <taxon>Bacillati</taxon>
        <taxon>Actinomycetota</taxon>
        <taxon>Actinomycetes</taxon>
        <taxon>Mycobacteriales</taxon>
        <taxon>Mycobacteriaceae</taxon>
        <taxon>Mycobacterium</taxon>
    </lineage>
</organism>
<reference key="1">
    <citation type="submission" date="2007-02" db="EMBL/GenBank/DDBJ databases">
        <title>Complete sequence of Mycobacterium sp. JLS.</title>
        <authorList>
            <consortium name="US DOE Joint Genome Institute"/>
            <person name="Copeland A."/>
            <person name="Lucas S."/>
            <person name="Lapidus A."/>
            <person name="Barry K."/>
            <person name="Detter J.C."/>
            <person name="Glavina del Rio T."/>
            <person name="Hammon N."/>
            <person name="Israni S."/>
            <person name="Dalin E."/>
            <person name="Tice H."/>
            <person name="Pitluck S."/>
            <person name="Chain P."/>
            <person name="Malfatti S."/>
            <person name="Shin M."/>
            <person name="Vergez L."/>
            <person name="Schmutz J."/>
            <person name="Larimer F."/>
            <person name="Land M."/>
            <person name="Hauser L."/>
            <person name="Kyrpides N."/>
            <person name="Mikhailova N."/>
            <person name="Miller C.D."/>
            <person name="Anderson A.J."/>
            <person name="Sims R.C."/>
            <person name="Richardson P."/>
        </authorList>
    </citation>
    <scope>NUCLEOTIDE SEQUENCE [LARGE SCALE GENOMIC DNA]</scope>
    <source>
        <strain>JLS</strain>
    </source>
</reference>